<organism evidence="8">
    <name type="scientific">Arabidopsis thaliana</name>
    <name type="common">Mouse-ear cress</name>
    <dbReference type="NCBI Taxonomy" id="3702"/>
    <lineage>
        <taxon>Eukaryota</taxon>
        <taxon>Viridiplantae</taxon>
        <taxon>Streptophyta</taxon>
        <taxon>Embryophyta</taxon>
        <taxon>Tracheophyta</taxon>
        <taxon>Spermatophyta</taxon>
        <taxon>Magnoliopsida</taxon>
        <taxon>eudicotyledons</taxon>
        <taxon>Gunneridae</taxon>
        <taxon>Pentapetalae</taxon>
        <taxon>rosids</taxon>
        <taxon>malvids</taxon>
        <taxon>Brassicales</taxon>
        <taxon>Brassicaceae</taxon>
        <taxon>Camelineae</taxon>
        <taxon>Arabidopsis</taxon>
    </lineage>
</organism>
<gene>
    <name evidence="5" type="primary">MYOB2</name>
    <name evidence="6" type="ordered locus">At1g70750</name>
    <name evidence="7" type="ORF">F5A18.7</name>
</gene>
<dbReference type="EMBL" id="AC011663">
    <property type="protein sequence ID" value="AAG52339.1"/>
    <property type="molecule type" value="Genomic_DNA"/>
</dbReference>
<dbReference type="EMBL" id="CP002684">
    <property type="protein sequence ID" value="AEE35110.1"/>
    <property type="molecule type" value="Genomic_DNA"/>
</dbReference>
<dbReference type="EMBL" id="AK228916">
    <property type="protein sequence ID" value="BAF00805.1"/>
    <property type="molecule type" value="mRNA"/>
</dbReference>
<dbReference type="PIR" id="A96732">
    <property type="entry name" value="A96732"/>
</dbReference>
<dbReference type="RefSeq" id="NP_564999.2">
    <property type="nucleotide sequence ID" value="NM_105743.4"/>
</dbReference>
<dbReference type="SMR" id="Q9CAC4"/>
<dbReference type="FunCoup" id="Q9CAC4">
    <property type="interactions" value="871"/>
</dbReference>
<dbReference type="STRING" id="3702.Q9CAC4"/>
<dbReference type="iPTMnet" id="Q9CAC4"/>
<dbReference type="PaxDb" id="3702-AT1G70750.1"/>
<dbReference type="ProteomicsDB" id="251220"/>
<dbReference type="EnsemblPlants" id="AT1G70750.1">
    <property type="protein sequence ID" value="AT1G70750.1"/>
    <property type="gene ID" value="AT1G70750"/>
</dbReference>
<dbReference type="GeneID" id="843412"/>
<dbReference type="Gramene" id="AT1G70750.1">
    <property type="protein sequence ID" value="AT1G70750.1"/>
    <property type="gene ID" value="AT1G70750"/>
</dbReference>
<dbReference type="KEGG" id="ath:AT1G70750"/>
<dbReference type="Araport" id="AT1G70750"/>
<dbReference type="TAIR" id="AT1G70750">
    <property type="gene designation" value="MYOB2"/>
</dbReference>
<dbReference type="eggNOG" id="ENOG502QVIB">
    <property type="taxonomic scope" value="Eukaryota"/>
</dbReference>
<dbReference type="HOGENOM" id="CLU_009392_0_0_1"/>
<dbReference type="InParanoid" id="Q9CAC4"/>
<dbReference type="OMA" id="LDFDMHF"/>
<dbReference type="PhylomeDB" id="Q9CAC4"/>
<dbReference type="PRO" id="PR:Q9CAC4"/>
<dbReference type="Proteomes" id="UP000006548">
    <property type="component" value="Chromosome 1"/>
</dbReference>
<dbReference type="ExpressionAtlas" id="Q9CAC4">
    <property type="expression patterns" value="baseline and differential"/>
</dbReference>
<dbReference type="GO" id="GO:0016020">
    <property type="term" value="C:membrane"/>
    <property type="evidence" value="ECO:0000314"/>
    <property type="project" value="UniProtKB"/>
</dbReference>
<dbReference type="GO" id="GO:0030133">
    <property type="term" value="C:transport vesicle"/>
    <property type="evidence" value="ECO:0000314"/>
    <property type="project" value="UniProtKB"/>
</dbReference>
<dbReference type="GO" id="GO:0017022">
    <property type="term" value="F:myosin binding"/>
    <property type="evidence" value="ECO:0000353"/>
    <property type="project" value="UniProtKB"/>
</dbReference>
<dbReference type="GO" id="GO:0080115">
    <property type="term" value="F:myosin XI tail binding"/>
    <property type="evidence" value="ECO:0000314"/>
    <property type="project" value="TAIR"/>
</dbReference>
<dbReference type="InterPro" id="IPR007656">
    <property type="entry name" value="GTD-bd"/>
</dbReference>
<dbReference type="InterPro" id="IPR039306">
    <property type="entry name" value="MYOB"/>
</dbReference>
<dbReference type="PANTHER" id="PTHR31448">
    <property type="entry name" value="MYOSIN-BINDING PROTEIN 2"/>
    <property type="match status" value="1"/>
</dbReference>
<dbReference type="PANTHER" id="PTHR31448:SF3">
    <property type="entry name" value="MYOSIN-BINDING PROTEIN 2"/>
    <property type="match status" value="1"/>
</dbReference>
<dbReference type="Pfam" id="PF04576">
    <property type="entry name" value="Zein-binding"/>
    <property type="match status" value="1"/>
</dbReference>
<dbReference type="PROSITE" id="PS51775">
    <property type="entry name" value="GTD_BINDING"/>
    <property type="match status" value="1"/>
</dbReference>
<protein>
    <recommendedName>
        <fullName evidence="5">Myosin-binding protein 2</fullName>
    </recommendedName>
</protein>
<sequence>MAANKFATLIHRKTNRITLILVYAFLEWSLIFFILLNSLFSYFILRFADYFGLKRPCLFCSRLDRFFDASGKSPSHRDLLCDDHALQLHSKPVEESNCGFGEFHNDLVHRGCCVEKISSSLCAPIESDFGNLDYPIGDEGQIYNGLKFPRSIFVFEEEKVGSVNLNDSQEETEEKKVPQSHEKLEDDDVDEEFSCYVSSFDCKNKEIATEKEEENRVDLPIEVETAESAPKNLEFYIDEEDCHLIPVEFYKPSEEVREISDINGDFILDFGVEHDFTAAAETEEISDFASPGESKPEDAETNLVASEMENDDEETDAEVSIGTEIPDHEQIGDIPSHQLIPHHDDDDHEEETLEFKTVTIETKMPVLNINEERILEAQGSMESSHSSLHNAMFHLEQRVSVDGIECPEGVLTVDKLKFELQEERKALHALYEELEVERNASAVAASETMAMINRLHEEKAAMQMEALQYQRMMEEQAEFDQEALQLLNELMVNREKENAELEKELEVYRKRMEEYEAKEKMGMLRRRLRDSSVDSYRNNGDSDENSNGELQFKNVEGVTDWKYRENEMENTPVDVVLRLDECLDDYDGERLSILGRLKFLEEKLTDLNNEEDDEEEAKTFESNGSINGNEHIHGKETNGKHRVIKSKRLLPLFDAVDGEMENGLSNGNHHENGFDDSEKGENVTIEEEVDELYERLEALEADREFLRHCVGSLKKGDKGVHLLHEILQHLRDLRNIDLTRVRENGDMSL</sequence>
<keyword id="KW-0175">Coiled coil</keyword>
<keyword id="KW-0472">Membrane</keyword>
<keyword id="KW-1185">Reference proteome</keyword>
<keyword id="KW-0812">Transmembrane</keyword>
<keyword id="KW-1133">Transmembrane helix</keyword>
<name>MYOB2_ARATH</name>
<proteinExistence type="evidence at protein level"/>
<comment type="function">
    <text evidence="4">Membrane-anchored myosin receptors that define a distinct, plant-specific transport vesicle compartment.</text>
</comment>
<comment type="subunit">
    <text evidence="4">Interacts with myosin XI-K and XI-1.</text>
</comment>
<comment type="subcellular location">
    <subcellularLocation>
        <location evidence="4">Endomembrane system</location>
        <topology evidence="1">Single-pass membrane protein</topology>
    </subcellularLocation>
</comment>
<comment type="tissue specificity">
    <text evidence="4">Expressed in leaf epidermal cells, roots and root hairs.</text>
</comment>
<comment type="domain">
    <text evidence="4">The GTD-binding domain is sufficient for myosin binding.</text>
</comment>
<comment type="disruption phenotype">
    <text evidence="4">No visible phenotype. Myob1 and myob2 double mutant has no visible phenotype, but a delayed flowering. Myob1, myob2 and myob3 triple mutant has a significant height reduction and a delayed flowering. Myob1, myob2, myob3 and myob4 quadruple mutant has a significant height reduction, a reduced rosette diameter and a delayed flowering.</text>
</comment>
<accession>Q9CAC4</accession>
<feature type="chain" id="PRO_0000431708" description="Myosin-binding protein 2">
    <location>
        <begin position="1"/>
        <end position="749"/>
    </location>
</feature>
<feature type="transmembrane region" description="Helical" evidence="1">
    <location>
        <begin position="17"/>
        <end position="37"/>
    </location>
</feature>
<feature type="domain" description="GTD-binding" evidence="2">
    <location>
        <begin position="411"/>
        <end position="509"/>
    </location>
</feature>
<feature type="region of interest" description="Disordered" evidence="3">
    <location>
        <begin position="164"/>
        <end position="184"/>
    </location>
</feature>
<feature type="region of interest" description="Disordered" evidence="3">
    <location>
        <begin position="608"/>
        <end position="640"/>
    </location>
</feature>
<feature type="coiled-coil region" evidence="1">
    <location>
        <begin position="589"/>
        <end position="621"/>
    </location>
</feature>
<feature type="coiled-coil region" evidence="1">
    <location>
        <begin position="676"/>
        <end position="710"/>
    </location>
</feature>
<feature type="compositionally biased region" description="Basic and acidic residues" evidence="3">
    <location>
        <begin position="173"/>
        <end position="184"/>
    </location>
</feature>
<feature type="compositionally biased region" description="Basic and acidic residues" evidence="3">
    <location>
        <begin position="630"/>
        <end position="639"/>
    </location>
</feature>
<reference key="1">
    <citation type="journal article" date="2000" name="Nature">
        <title>Sequence and analysis of chromosome 1 of the plant Arabidopsis thaliana.</title>
        <authorList>
            <person name="Theologis A."/>
            <person name="Ecker J.R."/>
            <person name="Palm C.J."/>
            <person name="Federspiel N.A."/>
            <person name="Kaul S."/>
            <person name="White O."/>
            <person name="Alonso J."/>
            <person name="Altafi H."/>
            <person name="Araujo R."/>
            <person name="Bowman C.L."/>
            <person name="Brooks S.Y."/>
            <person name="Buehler E."/>
            <person name="Chan A."/>
            <person name="Chao Q."/>
            <person name="Chen H."/>
            <person name="Cheuk R.F."/>
            <person name="Chin C.W."/>
            <person name="Chung M.K."/>
            <person name="Conn L."/>
            <person name="Conway A.B."/>
            <person name="Conway A.R."/>
            <person name="Creasy T.H."/>
            <person name="Dewar K."/>
            <person name="Dunn P."/>
            <person name="Etgu P."/>
            <person name="Feldblyum T.V."/>
            <person name="Feng J.-D."/>
            <person name="Fong B."/>
            <person name="Fujii C.Y."/>
            <person name="Gill J.E."/>
            <person name="Goldsmith A.D."/>
            <person name="Haas B."/>
            <person name="Hansen N.F."/>
            <person name="Hughes B."/>
            <person name="Huizar L."/>
            <person name="Hunter J.L."/>
            <person name="Jenkins J."/>
            <person name="Johnson-Hopson C."/>
            <person name="Khan S."/>
            <person name="Khaykin E."/>
            <person name="Kim C.J."/>
            <person name="Koo H.L."/>
            <person name="Kremenetskaia I."/>
            <person name="Kurtz D.B."/>
            <person name="Kwan A."/>
            <person name="Lam B."/>
            <person name="Langin-Hooper S."/>
            <person name="Lee A."/>
            <person name="Lee J.M."/>
            <person name="Lenz C.A."/>
            <person name="Li J.H."/>
            <person name="Li Y.-P."/>
            <person name="Lin X."/>
            <person name="Liu S.X."/>
            <person name="Liu Z.A."/>
            <person name="Luros J.S."/>
            <person name="Maiti R."/>
            <person name="Marziali A."/>
            <person name="Militscher J."/>
            <person name="Miranda M."/>
            <person name="Nguyen M."/>
            <person name="Nierman W.C."/>
            <person name="Osborne B.I."/>
            <person name="Pai G."/>
            <person name="Peterson J."/>
            <person name="Pham P.K."/>
            <person name="Rizzo M."/>
            <person name="Rooney T."/>
            <person name="Rowley D."/>
            <person name="Sakano H."/>
            <person name="Salzberg S.L."/>
            <person name="Schwartz J.R."/>
            <person name="Shinn P."/>
            <person name="Southwick A.M."/>
            <person name="Sun H."/>
            <person name="Tallon L.J."/>
            <person name="Tambunga G."/>
            <person name="Toriumi M.J."/>
            <person name="Town C.D."/>
            <person name="Utterback T."/>
            <person name="Van Aken S."/>
            <person name="Vaysberg M."/>
            <person name="Vysotskaia V.S."/>
            <person name="Walker M."/>
            <person name="Wu D."/>
            <person name="Yu G."/>
            <person name="Fraser C.M."/>
            <person name="Venter J.C."/>
            <person name="Davis R.W."/>
        </authorList>
    </citation>
    <scope>NUCLEOTIDE SEQUENCE [LARGE SCALE GENOMIC DNA]</scope>
    <source>
        <strain>cv. Columbia</strain>
    </source>
</reference>
<reference key="2">
    <citation type="journal article" date="2017" name="Plant J.">
        <title>Araport11: a complete reannotation of the Arabidopsis thaliana reference genome.</title>
        <authorList>
            <person name="Cheng C.Y."/>
            <person name="Krishnakumar V."/>
            <person name="Chan A.P."/>
            <person name="Thibaud-Nissen F."/>
            <person name="Schobel S."/>
            <person name="Town C.D."/>
        </authorList>
    </citation>
    <scope>GENOME REANNOTATION</scope>
    <source>
        <strain>cv. Columbia</strain>
    </source>
</reference>
<reference key="3">
    <citation type="submission" date="2006-07" db="EMBL/GenBank/DDBJ databases">
        <title>Large-scale analysis of RIKEN Arabidopsis full-length (RAFL) cDNAs.</title>
        <authorList>
            <person name="Totoki Y."/>
            <person name="Seki M."/>
            <person name="Ishida J."/>
            <person name="Nakajima M."/>
            <person name="Enju A."/>
            <person name="Kamiya A."/>
            <person name="Narusaka M."/>
            <person name="Shin-i T."/>
            <person name="Nakagawa M."/>
            <person name="Sakamoto N."/>
            <person name="Oishi K."/>
            <person name="Kohara Y."/>
            <person name="Kobayashi M."/>
            <person name="Toyoda A."/>
            <person name="Sakaki Y."/>
            <person name="Sakurai T."/>
            <person name="Iida K."/>
            <person name="Akiyama K."/>
            <person name="Satou M."/>
            <person name="Toyoda T."/>
            <person name="Konagaya A."/>
            <person name="Carninci P."/>
            <person name="Kawai J."/>
            <person name="Hayashizaki Y."/>
            <person name="Shinozaki K."/>
        </authorList>
    </citation>
    <scope>NUCLEOTIDE SEQUENCE [LARGE SCALE MRNA]</scope>
    <source>
        <strain>cv. Columbia</strain>
    </source>
</reference>
<reference key="4">
    <citation type="journal article" date="2013" name="Plant Cell">
        <title>Identification of myosin XI receptors in Arabidopsis defines a distinct class of transport vesicles.</title>
        <authorList>
            <person name="Peremyslov V.V."/>
            <person name="Morgun E.A."/>
            <person name="Kurth E.G."/>
            <person name="Makarova K.S."/>
            <person name="Koonin E.V."/>
            <person name="Dolja V.V."/>
        </authorList>
    </citation>
    <scope>FUNCTION</scope>
    <scope>INTERACTION WITH XI-K AND XI-1</scope>
    <scope>DOMAIN</scope>
    <scope>SUBCELLULAR LOCATION</scope>
    <scope>TISSUE SPECIFICITY</scope>
    <scope>DISRUPTION PHENOTYPE</scope>
</reference>
<evidence type="ECO:0000255" key="1"/>
<evidence type="ECO:0000255" key="2">
    <source>
        <dbReference type="PROSITE-ProRule" id="PRU01111"/>
    </source>
</evidence>
<evidence type="ECO:0000256" key="3">
    <source>
        <dbReference type="SAM" id="MobiDB-lite"/>
    </source>
</evidence>
<evidence type="ECO:0000269" key="4">
    <source>
    </source>
</evidence>
<evidence type="ECO:0000303" key="5">
    <source>
    </source>
</evidence>
<evidence type="ECO:0000312" key="6">
    <source>
        <dbReference type="Araport" id="AT1G70750"/>
    </source>
</evidence>
<evidence type="ECO:0000312" key="7">
    <source>
        <dbReference type="EMBL" id="AAG52339.1"/>
    </source>
</evidence>
<evidence type="ECO:0000312" key="8">
    <source>
        <dbReference type="Proteomes" id="UP000006548"/>
    </source>
</evidence>